<dbReference type="EC" id="2.4.1.16" evidence="7"/>
<dbReference type="EMBL" id="DS572698">
    <property type="protein sequence ID" value="EGY21056.1"/>
    <property type="molecule type" value="Genomic_DNA"/>
</dbReference>
<dbReference type="RefSeq" id="XP_009651528.1">
    <property type="nucleotide sequence ID" value="XM_009653233.1"/>
</dbReference>
<dbReference type="SMR" id="G2WY98"/>
<dbReference type="FunCoup" id="G2WY98">
    <property type="interactions" value="80"/>
</dbReference>
<dbReference type="STRING" id="498257.G2WY98"/>
<dbReference type="EnsemblFungi" id="EGY21056">
    <property type="protein sequence ID" value="EGY21056"/>
    <property type="gene ID" value="VDAG_02580"/>
</dbReference>
<dbReference type="GeneID" id="20704043"/>
<dbReference type="KEGG" id="vda:VDAG_02580"/>
<dbReference type="eggNOG" id="KOG2571">
    <property type="taxonomic scope" value="Eukaryota"/>
</dbReference>
<dbReference type="HOGENOM" id="CLU_004760_3_1_1"/>
<dbReference type="InParanoid" id="G2WY98"/>
<dbReference type="OMA" id="AWILHYV"/>
<dbReference type="OrthoDB" id="12470at1028384"/>
<dbReference type="PHI-base" id="PHI:123305"/>
<dbReference type="Proteomes" id="UP000001611">
    <property type="component" value="Chromosome 3"/>
</dbReference>
<dbReference type="GO" id="GO:0030428">
    <property type="term" value="C:cell septum"/>
    <property type="evidence" value="ECO:0007669"/>
    <property type="project" value="TreeGrafter"/>
</dbReference>
<dbReference type="GO" id="GO:0045009">
    <property type="term" value="C:chitosome"/>
    <property type="evidence" value="ECO:0007669"/>
    <property type="project" value="EnsemblFungi"/>
</dbReference>
<dbReference type="GO" id="GO:0005886">
    <property type="term" value="C:plasma membrane"/>
    <property type="evidence" value="ECO:0007669"/>
    <property type="project" value="UniProtKB-SubCell"/>
</dbReference>
<dbReference type="GO" id="GO:0004100">
    <property type="term" value="F:chitin synthase activity"/>
    <property type="evidence" value="ECO:0007669"/>
    <property type="project" value="UniProtKB-EC"/>
</dbReference>
<dbReference type="GO" id="GO:0030476">
    <property type="term" value="P:ascospore wall assembly"/>
    <property type="evidence" value="ECO:0007669"/>
    <property type="project" value="EnsemblFungi"/>
</dbReference>
<dbReference type="GO" id="GO:0006031">
    <property type="term" value="P:chitin biosynthetic process"/>
    <property type="evidence" value="ECO:0007669"/>
    <property type="project" value="EnsemblFungi"/>
</dbReference>
<dbReference type="GO" id="GO:0000920">
    <property type="term" value="P:septum digestion after cytokinesis"/>
    <property type="evidence" value="ECO:0007669"/>
    <property type="project" value="EnsemblFungi"/>
</dbReference>
<dbReference type="CDD" id="cd04190">
    <property type="entry name" value="Chitin_synth_C"/>
    <property type="match status" value="1"/>
</dbReference>
<dbReference type="InterPro" id="IPR004835">
    <property type="entry name" value="Chitin_synth"/>
</dbReference>
<dbReference type="InterPro" id="IPR004834">
    <property type="entry name" value="Chitin_synth_fun"/>
</dbReference>
<dbReference type="InterPro" id="IPR013616">
    <property type="entry name" value="Chitin_synth_N"/>
</dbReference>
<dbReference type="PANTHER" id="PTHR22914">
    <property type="entry name" value="CHITIN SYNTHASE"/>
    <property type="match status" value="1"/>
</dbReference>
<dbReference type="PANTHER" id="PTHR22914:SF9">
    <property type="entry name" value="CHITIN SYNTHASE 1"/>
    <property type="match status" value="1"/>
</dbReference>
<dbReference type="Pfam" id="PF01644">
    <property type="entry name" value="Chitin_synth_1"/>
    <property type="match status" value="1"/>
</dbReference>
<dbReference type="Pfam" id="PF08407">
    <property type="entry name" value="Chitin_synth_1N"/>
    <property type="match status" value="1"/>
</dbReference>
<accession>G2WY98</accession>
<gene>
    <name evidence="5" type="primary">CHS3</name>
    <name type="ORF">VDAG_02580</name>
</gene>
<feature type="chain" id="PRO_0000460802" description="Chitin synthase 3">
    <location>
        <begin position="1"/>
        <end position="886"/>
    </location>
</feature>
<feature type="transmembrane region" description="Helical" evidence="1">
    <location>
        <begin position="428"/>
        <end position="448"/>
    </location>
</feature>
<feature type="transmembrane region" description="Helical" evidence="1">
    <location>
        <begin position="526"/>
        <end position="546"/>
    </location>
</feature>
<feature type="transmembrane region" description="Helical" evidence="1">
    <location>
        <begin position="556"/>
        <end position="576"/>
    </location>
</feature>
<feature type="transmembrane region" description="Helical" evidence="1">
    <location>
        <begin position="602"/>
        <end position="622"/>
    </location>
</feature>
<feature type="transmembrane region" description="Helical" evidence="1">
    <location>
        <begin position="637"/>
        <end position="657"/>
    </location>
</feature>
<feature type="transmembrane region" description="Helical" evidence="1">
    <location>
        <begin position="683"/>
        <end position="703"/>
    </location>
</feature>
<feature type="transmembrane region" description="Helical" evidence="1">
    <location>
        <begin position="712"/>
        <end position="732"/>
    </location>
</feature>
<feature type="transmembrane region" description="Helical" evidence="1">
    <location>
        <begin position="813"/>
        <end position="833"/>
    </location>
</feature>
<feature type="transmembrane region" description="Helical" evidence="1">
    <location>
        <begin position="858"/>
        <end position="878"/>
    </location>
</feature>
<feature type="region of interest" description="Disordered" evidence="3">
    <location>
        <begin position="1"/>
        <end position="70"/>
    </location>
</feature>
<feature type="region of interest" description="Disordered" evidence="3">
    <location>
        <begin position="86"/>
        <end position="138"/>
    </location>
</feature>
<feature type="region of interest" description="Disordered" evidence="3">
    <location>
        <begin position="745"/>
        <end position="768"/>
    </location>
</feature>
<feature type="compositionally biased region" description="Basic and acidic residues" evidence="3">
    <location>
        <begin position="7"/>
        <end position="17"/>
    </location>
</feature>
<feature type="compositionally biased region" description="Polar residues" evidence="3">
    <location>
        <begin position="37"/>
        <end position="56"/>
    </location>
</feature>
<feature type="compositionally biased region" description="Basic and acidic residues" evidence="3">
    <location>
        <begin position="106"/>
        <end position="122"/>
    </location>
</feature>
<feature type="glycosylation site" description="N-linked (GlcNAc...) asparagine" evidence="2">
    <location>
        <position position="51"/>
    </location>
</feature>
<feature type="glycosylation site" description="N-linked (GlcNAc...) asparagine" evidence="2">
    <location>
        <position position="196"/>
    </location>
</feature>
<sequence>MQQGYQLDDRPYGRPEQLDYPQTGPSPGAVPGRYGTPSDQLQLNAAQSVDNLSRNSPFADPHQRGPYQTDYAVNPEAHHDAYYNQPYEPTPMEGTPLGYDPGQPGYDHDDLRPMLPHQDSHASEPYQDQPTPQGAGGGIKRWKTVKQVLLYRGNLVLDCPVPPRLLNQLPHGERDEFTHMRYSAATCDPDHFYEENFTLRQRLFSKPRHTELFIVVTMYNEDEILFARSMIGVFKNIEYMCNRKESKTWGKDAWKKIVVCVVSDGRSKINPRTRALLAGMGVYQEGIAKQQVNGKDVTSHIYEYTTQVGMRIEKGVVQLVPKQQPVQILFCLKEKNQKKINSHRWFFSAFGRVLDPNICVLLDAGTKPGGNSIYHLWKAFDLEPMCAGACGEIKAMLGTGGKNLLNPLIATQNFEYKMSNILDKPLESAFGFISVLPGAFSAYRYVALQNDKKGQGPLEKYFAGETLHGSDAGIFESNMYLAEDRILCFELVTKRNCHWILQYVKSATGETDVPDTVTELVLQRRRWLNGSFFAAIYAIAHFYQFFRSDHSFLRKVMLFIEFIFHTINMVFAWFAVGNFFLVFSILTKSLGGDELLGRTGEILGVVFTWLYGVALFTCFVLSMGNRPSGSRWYYTTMVYFWAIIMVYLMFAAIFIAVKAIMADVNDGTPFSLGELFRNPVFYTLIVSVMSTYGIWFLASFLMFDPWHMFTSFVQYMLLTPTYINILNVYAFCNTHDISWGTKGDDQAEKLPSVSTKDGSGKTDLPDESDLNAQYERELTAFGSKPIKVVHTPTEAQRAEAQMDYYRGVRSITVLAWMITNFGLAAVVLSAAGLDRIDPKHQTAEEEDPNARANIYMTVVLWSVAGLAAFKFIGAMWFLVVRMFRGV</sequence>
<name>CHS3_VERDV</name>
<keyword id="KW-1003">Cell membrane</keyword>
<keyword id="KW-0961">Cell wall biogenesis/degradation</keyword>
<keyword id="KW-0325">Glycoprotein</keyword>
<keyword id="KW-0328">Glycosyltransferase</keyword>
<keyword id="KW-0472">Membrane</keyword>
<keyword id="KW-1185">Reference proteome</keyword>
<keyword id="KW-0808">Transferase</keyword>
<keyword id="KW-0812">Transmembrane</keyword>
<keyword id="KW-1133">Transmembrane helix</keyword>
<reference key="1">
    <citation type="journal article" date="2011" name="PLoS Pathog.">
        <title>Comparative genomics yields insights into niche adaptation of plant vascular wilt pathogens.</title>
        <authorList>
            <person name="Klosterman S.J."/>
            <person name="Subbarao K.V."/>
            <person name="Kang S."/>
            <person name="Veronese P."/>
            <person name="Gold S.E."/>
            <person name="Thomma B.P.H.J."/>
            <person name="Chen Z."/>
            <person name="Henrissat B."/>
            <person name="Lee Y.-H."/>
            <person name="Park J."/>
            <person name="Garcia-Pedrajas M.D."/>
            <person name="Barbara D.J."/>
            <person name="Anchieta A."/>
            <person name="de Jonge R."/>
            <person name="Santhanam P."/>
            <person name="Maruthachalam K."/>
            <person name="Atallah Z."/>
            <person name="Amyotte S.G."/>
            <person name="Paz Z."/>
            <person name="Inderbitzin P."/>
            <person name="Hayes R.J."/>
            <person name="Heiman D.I."/>
            <person name="Young S."/>
            <person name="Zeng Q."/>
            <person name="Engels R."/>
            <person name="Galagan J."/>
            <person name="Cuomo C.A."/>
            <person name="Dobinson K.F."/>
            <person name="Ma L.-J."/>
        </authorList>
    </citation>
    <scope>NUCLEOTIDE SEQUENCE [LARGE SCALE GENOMIC DNA]</scope>
    <source>
        <strain>VdLs.17 / ATCC MYA-4575 / FGSC 10137</strain>
    </source>
</reference>
<reference key="2">
    <citation type="journal article" date="2022" name="J. Fungi">
        <title>Chitin Synthase Genes Are Differentially Required for Growth, Stress Response, and Virulence in Verticillium dahliae.</title>
        <authorList>
            <person name="Qin J."/>
            <person name="Zhao P."/>
            <person name="Ye Z."/>
            <person name="Sun L."/>
            <person name="Hu X."/>
            <person name="Zhang J."/>
        </authorList>
    </citation>
    <scope>FUNCTION</scope>
    <scope>DISRUPTION PHENOTYPE</scope>
</reference>
<comment type="function">
    <text evidence="4 7">Polymerizes chitin, a structural polymer of the cell wall and septum, by transferring the sugar moiety of UDP-GlcNAc to the non-reducing end of the growing chitin polymer (Probable). Involved in tolerance to hyperosmotic conditions (PubMed:35887437). CHS3 is the only V.dahliae chitin synthase that is not involved in virulence (PubMed:35887437).</text>
</comment>
<comment type="catalytic activity">
    <reaction evidence="7">
        <text>[(1-&gt;4)-N-acetyl-beta-D-glucosaminyl](n) + UDP-N-acetyl-alpha-D-glucosamine = [(1-&gt;4)-N-acetyl-beta-D-glucosaminyl](n+1) + UDP + H(+)</text>
        <dbReference type="Rhea" id="RHEA:16637"/>
        <dbReference type="Rhea" id="RHEA-COMP:9593"/>
        <dbReference type="Rhea" id="RHEA-COMP:9595"/>
        <dbReference type="ChEBI" id="CHEBI:15378"/>
        <dbReference type="ChEBI" id="CHEBI:17029"/>
        <dbReference type="ChEBI" id="CHEBI:57705"/>
        <dbReference type="ChEBI" id="CHEBI:58223"/>
        <dbReference type="EC" id="2.4.1.16"/>
    </reaction>
    <physiologicalReaction direction="left-to-right" evidence="7">
        <dbReference type="Rhea" id="RHEA:16638"/>
    </physiologicalReaction>
</comment>
<comment type="subcellular location">
    <subcellularLocation>
        <location evidence="6">Cell membrane</location>
        <topology evidence="1">Multi-pass membrane protein</topology>
    </subcellularLocation>
</comment>
<comment type="disruption phenotype">
    <text evidence="4">Leads to a winkled surface morphology (PubMed:35887437). Does not affect pathogenicity in Arabidopsis and cotton plants (PubMed:35887437).</text>
</comment>
<comment type="similarity">
    <text evidence="6">Belongs to the chitin synthase family. Class I subfamily.</text>
</comment>
<proteinExistence type="inferred from homology"/>
<evidence type="ECO:0000255" key="1"/>
<evidence type="ECO:0000255" key="2">
    <source>
        <dbReference type="PROSITE-ProRule" id="PRU00498"/>
    </source>
</evidence>
<evidence type="ECO:0000256" key="3">
    <source>
        <dbReference type="SAM" id="MobiDB-lite"/>
    </source>
</evidence>
<evidence type="ECO:0000269" key="4">
    <source>
    </source>
</evidence>
<evidence type="ECO:0000303" key="5">
    <source>
    </source>
</evidence>
<evidence type="ECO:0000305" key="6"/>
<evidence type="ECO:0000305" key="7">
    <source>
    </source>
</evidence>
<organism>
    <name type="scientific">Verticillium dahliae (strain VdLs.17 / ATCC MYA-4575 / FGSC 10137)</name>
    <name type="common">Verticillium wilt</name>
    <dbReference type="NCBI Taxonomy" id="498257"/>
    <lineage>
        <taxon>Eukaryota</taxon>
        <taxon>Fungi</taxon>
        <taxon>Dikarya</taxon>
        <taxon>Ascomycota</taxon>
        <taxon>Pezizomycotina</taxon>
        <taxon>Sordariomycetes</taxon>
        <taxon>Hypocreomycetidae</taxon>
        <taxon>Glomerellales</taxon>
        <taxon>Plectosphaerellaceae</taxon>
        <taxon>Verticillium</taxon>
    </lineage>
</organism>
<protein>
    <recommendedName>
        <fullName evidence="5">Chitin synthase 3</fullName>
        <ecNumber evidence="7">2.4.1.16</ecNumber>
    </recommendedName>
    <alternativeName>
        <fullName evidence="6">Chitin-UDP acetyl-glucosaminyl transferase 3</fullName>
    </alternativeName>
    <alternativeName>
        <fullName evidence="6">Class-I chitin synthase 3</fullName>
    </alternativeName>
</protein>